<evidence type="ECO:0000305" key="1"/>
<name>FLGE_BRUAB</name>
<protein>
    <recommendedName>
        <fullName>Flagellar hook protein FlgE</fullName>
    </recommendedName>
</protein>
<keyword id="KW-0975">Bacterial flagellum</keyword>
<gene>
    <name type="primary">flgE</name>
    <name type="ordered locus">BruAb2_1076</name>
</gene>
<sequence length="396" mass="40848">MSLYGMMRTGVSGMNAQANRLSTVADNIANASTVGYKRAETQFSSLVLPSTAGQYNSGSVLTDVRYGISDQGGIRSTSSTTDLAIDGNGYFVVQGPGGSTYLTRAGSFVPDKNGDLVNSAGYYLLGAGADEAAGGLTVAGLNVVNVNAAALPAEGSTAGDFTVNLPSTDQAPAAGGYNHKTSLISYNDKGEKITLDVYFTKTGADEWNVSVKNAADGVEIGTTVLNFDPTTGDLVSGGNVAVNLGAYGGQTLNLNLGGSTQRAGDYTISQAVINGQAPSSIKGVDVGNDGAVVAVYENGTQKVLYRIPLANVASPDRMTVVSGNIFLPSAESGDVRLGFPQGDGMGKIMSGTLEESNADIAQELTDMIEAQRSYTANSKVFQTGFELMDVLVNLKR</sequence>
<organism>
    <name type="scientific">Brucella abortus biovar 1 (strain 9-941)</name>
    <dbReference type="NCBI Taxonomy" id="262698"/>
    <lineage>
        <taxon>Bacteria</taxon>
        <taxon>Pseudomonadati</taxon>
        <taxon>Pseudomonadota</taxon>
        <taxon>Alphaproteobacteria</taxon>
        <taxon>Hyphomicrobiales</taxon>
        <taxon>Brucellaceae</taxon>
        <taxon>Brucella/Ochrobactrum group</taxon>
        <taxon>Brucella</taxon>
    </lineage>
</organism>
<comment type="subcellular location">
    <subcellularLocation>
        <location>Bacterial flagellum basal body</location>
    </subcellularLocation>
</comment>
<comment type="similarity">
    <text evidence="1">Belongs to the flagella basal body rod proteins family.</text>
</comment>
<comment type="caution">
    <text evidence="1">Brucella species display species-specific inactivation of flagellar genes and are consequently nonmotile.</text>
</comment>
<dbReference type="EMBL" id="AF019252">
    <property type="protein sequence ID" value="AAC01569.1"/>
    <property type="molecule type" value="Genomic_DNA"/>
</dbReference>
<dbReference type="EMBL" id="AF325192">
    <property type="protein sequence ID" value="AAG52877.1"/>
    <property type="molecule type" value="Genomic_DNA"/>
</dbReference>
<dbReference type="EMBL" id="AE017224">
    <property type="protein sequence ID" value="AAX76449.1"/>
    <property type="molecule type" value="Genomic_DNA"/>
</dbReference>
<dbReference type="RefSeq" id="WP_002966644.1">
    <property type="nucleotide sequence ID" value="NC_006933.1"/>
</dbReference>
<dbReference type="SMR" id="O52070"/>
<dbReference type="EnsemblBacteria" id="AAX76449">
    <property type="protein sequence ID" value="AAX76449"/>
    <property type="gene ID" value="BruAb2_1076"/>
</dbReference>
<dbReference type="KEGG" id="bmb:BruAb2_1076"/>
<dbReference type="HOGENOM" id="CLU_013687_2_3_5"/>
<dbReference type="PRO" id="PR:O52070"/>
<dbReference type="Proteomes" id="UP000000540">
    <property type="component" value="Chromosome II"/>
</dbReference>
<dbReference type="GO" id="GO:0009425">
    <property type="term" value="C:bacterial-type flagellum basal body"/>
    <property type="evidence" value="ECO:0007669"/>
    <property type="project" value="UniProtKB-SubCell"/>
</dbReference>
<dbReference type="GO" id="GO:0009424">
    <property type="term" value="C:bacterial-type flagellum hook"/>
    <property type="evidence" value="ECO:0007669"/>
    <property type="project" value="TreeGrafter"/>
</dbReference>
<dbReference type="GO" id="GO:0005829">
    <property type="term" value="C:cytosol"/>
    <property type="evidence" value="ECO:0007669"/>
    <property type="project" value="TreeGrafter"/>
</dbReference>
<dbReference type="GO" id="GO:0071978">
    <property type="term" value="P:bacterial-type flagellum-dependent swarming motility"/>
    <property type="evidence" value="ECO:0007669"/>
    <property type="project" value="TreeGrafter"/>
</dbReference>
<dbReference type="Gene3D" id="2.60.98.20">
    <property type="entry name" value="Flagellar hook protein FlgE"/>
    <property type="match status" value="1"/>
</dbReference>
<dbReference type="InterPro" id="IPR037058">
    <property type="entry name" value="Falgellar_hook_FlgE_sf"/>
</dbReference>
<dbReference type="InterPro" id="IPR001444">
    <property type="entry name" value="Flag_bb_rod_N"/>
</dbReference>
<dbReference type="InterPro" id="IPR019776">
    <property type="entry name" value="Flagellar_basal_body_rod_CS"/>
</dbReference>
<dbReference type="InterPro" id="IPR020013">
    <property type="entry name" value="Flagellar_FlgE/F/G"/>
</dbReference>
<dbReference type="InterPro" id="IPR010930">
    <property type="entry name" value="Flg_bb/hook_C_dom"/>
</dbReference>
<dbReference type="InterPro" id="IPR037925">
    <property type="entry name" value="FlgE/F/G-like"/>
</dbReference>
<dbReference type="InterPro" id="IPR011491">
    <property type="entry name" value="FlgE_D2"/>
</dbReference>
<dbReference type="InterPro" id="IPR053967">
    <property type="entry name" value="LlgE_F_G-like_D1"/>
</dbReference>
<dbReference type="NCBIfam" id="TIGR03506">
    <property type="entry name" value="FlgEFG_subfam"/>
    <property type="match status" value="1"/>
</dbReference>
<dbReference type="PANTHER" id="PTHR30435:SF1">
    <property type="entry name" value="FLAGELLAR HOOK PROTEIN FLGE"/>
    <property type="match status" value="1"/>
</dbReference>
<dbReference type="PANTHER" id="PTHR30435">
    <property type="entry name" value="FLAGELLAR PROTEIN"/>
    <property type="match status" value="1"/>
</dbReference>
<dbReference type="Pfam" id="PF00460">
    <property type="entry name" value="Flg_bb_rod"/>
    <property type="match status" value="1"/>
</dbReference>
<dbReference type="Pfam" id="PF06429">
    <property type="entry name" value="Flg_bbr_C"/>
    <property type="match status" value="1"/>
</dbReference>
<dbReference type="Pfam" id="PF07559">
    <property type="entry name" value="FlgE_D2"/>
    <property type="match status" value="1"/>
</dbReference>
<dbReference type="Pfam" id="PF22692">
    <property type="entry name" value="LlgE_F_G_D1"/>
    <property type="match status" value="1"/>
</dbReference>
<dbReference type="SUPFAM" id="SSF117143">
    <property type="entry name" value="Flagellar hook protein flgE"/>
    <property type="match status" value="1"/>
</dbReference>
<dbReference type="PROSITE" id="PS00588">
    <property type="entry name" value="FLAGELLA_BB_ROD"/>
    <property type="match status" value="1"/>
</dbReference>
<feature type="chain" id="PRO_0000180819" description="Flagellar hook protein FlgE">
    <location>
        <begin position="1"/>
        <end position="396"/>
    </location>
</feature>
<feature type="sequence conflict" description="In Ref. 1; AAC01569." evidence="1" ref="1">
    <original>N</original>
    <variation>D</variation>
    <location>
        <position position="213"/>
    </location>
</feature>
<reference key="1">
    <citation type="journal article" date="1998" name="Microb. Comp. Genomics">
        <title>On the presence and organization of open reading frames of the nonmotile pathogen Brucella abortus similar to class II, III, and IV flagellar genes and to LcrD virulence superfamily.</title>
        <authorList>
            <person name="Halling S.M."/>
        </authorList>
    </citation>
    <scope>NUCLEOTIDE SEQUENCE [GENOMIC DNA]</scope>
    <source>
        <strain>544 / Biovar 1</strain>
    </source>
</reference>
<reference key="2">
    <citation type="submission" date="2000-11" db="EMBL/GenBank/DDBJ databases">
        <title>Flagellar region in the genome of Brucella abortus 544.</title>
        <authorList>
            <person name="Fretin D."/>
            <person name="Fauconnier A."/>
            <person name="Tibor A."/>
            <person name="Bellefontaine A.-F."/>
            <person name="Vandenhaute J."/>
            <person name="Letesson J.-J."/>
        </authorList>
    </citation>
    <scope>NUCLEOTIDE SEQUENCE [GENOMIC DNA]</scope>
    <source>
        <strain>544 / Biovar 1</strain>
    </source>
</reference>
<reference key="3">
    <citation type="journal article" date="2005" name="J. Bacteriol.">
        <title>Completion of the genome sequence of Brucella abortus and comparison to the highly similar genomes of Brucella melitensis and Brucella suis.</title>
        <authorList>
            <person name="Halling S.M."/>
            <person name="Peterson-Burch B.D."/>
            <person name="Bricker B.J."/>
            <person name="Zuerner R.L."/>
            <person name="Qing Z."/>
            <person name="Li L.-L."/>
            <person name="Kapur V."/>
            <person name="Alt D.P."/>
            <person name="Olsen S.C."/>
        </authorList>
    </citation>
    <scope>NUCLEOTIDE SEQUENCE [LARGE SCALE GENOMIC DNA]</scope>
    <source>
        <strain>9-941</strain>
    </source>
</reference>
<accession>O52070</accession>
<accession>Q576I5</accession>
<accession>Q9AMF5</accession>
<proteinExistence type="inferred from homology"/>